<name>YMF21_MARPO</name>
<feature type="chain" id="PRO_0000196849" description="Uncharacterized mitochondrial protein ymf21">
    <location>
        <begin position="1"/>
        <end position="180"/>
    </location>
</feature>
<geneLocation type="mitochondrion"/>
<proteinExistence type="predicted"/>
<gene>
    <name type="primary">YMF21</name>
</gene>
<reference key="1">
    <citation type="journal article" date="1992" name="J. Mol. Biol.">
        <title>Gene organization deduced from the complete sequence of liverwort Marchantia polymorpha mitochondrial DNA. A primitive form of plant mitochondrial genome.</title>
        <authorList>
            <person name="Oda K."/>
            <person name="Yamato K."/>
            <person name="Ohta E."/>
            <person name="Nakamura Y."/>
            <person name="Takemura M."/>
            <person name="Nozato N."/>
            <person name="Akashi K."/>
            <person name="Kanegae T."/>
            <person name="Ogura Y."/>
            <person name="Kohchi T."/>
            <person name="Ohyama K."/>
        </authorList>
    </citation>
    <scope>NUCLEOTIDE SEQUENCE [GENOMIC DNA]</scope>
</reference>
<protein>
    <recommendedName>
        <fullName>Uncharacterized mitochondrial protein ymf21</fullName>
    </recommendedName>
    <alternativeName>
        <fullName>ORF180</fullName>
    </alternativeName>
</protein>
<keyword id="KW-0496">Mitochondrion</keyword>
<dbReference type="EMBL" id="M68929">
    <property type="protein sequence ID" value="AAC09412.1"/>
    <property type="molecule type" value="Genomic_DNA"/>
</dbReference>
<dbReference type="PIR" id="S25973">
    <property type="entry name" value="S25973"/>
</dbReference>
<dbReference type="GO" id="GO:0005739">
    <property type="term" value="C:mitochondrion"/>
    <property type="evidence" value="ECO:0007669"/>
    <property type="project" value="UniProtKB-SubCell"/>
</dbReference>
<accession>P38464</accession>
<comment type="subcellular location">
    <subcellularLocation>
        <location evidence="1">Mitochondrion</location>
    </subcellularLocation>
</comment>
<organism>
    <name type="scientific">Marchantia polymorpha</name>
    <name type="common">Common liverwort</name>
    <name type="synonym">Marchantia aquatica</name>
    <dbReference type="NCBI Taxonomy" id="3197"/>
    <lineage>
        <taxon>Eukaryota</taxon>
        <taxon>Viridiplantae</taxon>
        <taxon>Streptophyta</taxon>
        <taxon>Embryophyta</taxon>
        <taxon>Marchantiophyta</taxon>
        <taxon>Marchantiopsida</taxon>
        <taxon>Marchantiidae</taxon>
        <taxon>Marchantiales</taxon>
        <taxon>Marchantiaceae</taxon>
        <taxon>Marchantia</taxon>
    </lineage>
</organism>
<evidence type="ECO:0000305" key="1"/>
<sequence length="180" mass="20269">MILHKCGLPYFASETEKLIKHLKTSHKVKLGPQKLKKCIIVFKDAVLDTITGRVEEFSPDRFCNAKLPYNIGISQLEDIPCPDIPGDLCPTFTEFLDSFTGGKDDLKKFIRAYFNHLLRSDNLSQRFLYMMGPTGTGKSVFSLVSEVLVGSINTCHTTLARMNQPLGFNLIQFKEDVNCC</sequence>